<protein>
    <recommendedName>
        <fullName evidence="1">Trigger factor</fullName>
        <shortName evidence="1">TF</shortName>
        <ecNumber evidence="1">5.2.1.8</ecNumber>
    </recommendedName>
    <alternativeName>
        <fullName evidence="1">PPIase</fullName>
    </alternativeName>
</protein>
<organism>
    <name type="scientific">Rhizorhabdus wittichii (strain DSM 6014 / CCUG 31198 / JCM 15750 / NBRC 105917 / EY 4224 / RW1)</name>
    <name type="common">Sphingomonas wittichii</name>
    <dbReference type="NCBI Taxonomy" id="392499"/>
    <lineage>
        <taxon>Bacteria</taxon>
        <taxon>Pseudomonadati</taxon>
        <taxon>Pseudomonadota</taxon>
        <taxon>Alphaproteobacteria</taxon>
        <taxon>Sphingomonadales</taxon>
        <taxon>Sphingomonadaceae</taxon>
        <taxon>Rhizorhabdus</taxon>
    </lineage>
</organism>
<gene>
    <name evidence="1" type="primary">tig</name>
    <name type="ordered locus">Swit_0594</name>
</gene>
<sequence length="551" mass="59597">MQTVETLNEGLKRAYTVTIPANDVAQRVEAEIKSIAPQVRMPGFRPGKVPANLIKKMHGPAIEQDVLNKTVQDGVQQLLAEQKLRPAMQPSVELVGGDYEPGKDVALKVELEVLPDVPPPAIEGLKLERLSVEAPTDEIDAQIKRIADQQKRYDDAKDGHPAVEGDLVVLDFAGSVDGVAFEGGTGTGMSVELGSGRLIPGFEDQLEGIKKGESRSLNVTFPKDYGEKSLAGKAAVFEVTATDVRVPGETKVDDEFAQSLGLQGLDQLRELIKGQVEQELNGLTRTHMKRKLLDQLAAGHDFPVPPSMVEAEFGQIWAQLEHEATHEEDPEAARAEMEKDRDDYRAIAERRVRLGLLLSEIGQQNGVEVSAQEMQRLVQQAAMQYQPADRDRFVQYLQQDPMAAAQLRAPLYEDKVVDFLFDKAEVSDRTVTRDELEAAIEADDDTIGKGHVHGPGCGHDHHDHDHDHDHAAPAKKPAAKKAAAKPAAEEAPAAEDKPAAKKKAAVKTEEAAEAAPAPKKAPAKKAAAAKAEEAPAAAPKKAPAKKKAAAE</sequence>
<proteinExistence type="inferred from homology"/>
<name>TIG_RHIWR</name>
<keyword id="KW-0131">Cell cycle</keyword>
<keyword id="KW-0132">Cell division</keyword>
<keyword id="KW-0143">Chaperone</keyword>
<keyword id="KW-0963">Cytoplasm</keyword>
<keyword id="KW-0413">Isomerase</keyword>
<keyword id="KW-1185">Reference proteome</keyword>
<keyword id="KW-0697">Rotamase</keyword>
<reference key="1">
    <citation type="journal article" date="2010" name="J. Bacteriol.">
        <title>Genome sequence of the dioxin-mineralizing bacterium Sphingomonas wittichii RW1.</title>
        <authorList>
            <person name="Miller T.R."/>
            <person name="Delcher A.L."/>
            <person name="Salzberg S.L."/>
            <person name="Saunders E."/>
            <person name="Detter J.C."/>
            <person name="Halden R.U."/>
        </authorList>
    </citation>
    <scope>NUCLEOTIDE SEQUENCE [LARGE SCALE GENOMIC DNA]</scope>
    <source>
        <strain>DSM 6014 / CCUG 31198 / JCM 15750 / NBRC 105917 / EY 4224 / RW1</strain>
    </source>
</reference>
<comment type="function">
    <text evidence="1">Involved in protein export. Acts as a chaperone by maintaining the newly synthesized protein in an open conformation. Functions as a peptidyl-prolyl cis-trans isomerase.</text>
</comment>
<comment type="catalytic activity">
    <reaction evidence="1">
        <text>[protein]-peptidylproline (omega=180) = [protein]-peptidylproline (omega=0)</text>
        <dbReference type="Rhea" id="RHEA:16237"/>
        <dbReference type="Rhea" id="RHEA-COMP:10747"/>
        <dbReference type="Rhea" id="RHEA-COMP:10748"/>
        <dbReference type="ChEBI" id="CHEBI:83833"/>
        <dbReference type="ChEBI" id="CHEBI:83834"/>
        <dbReference type="EC" id="5.2.1.8"/>
    </reaction>
</comment>
<comment type="subcellular location">
    <subcellularLocation>
        <location>Cytoplasm</location>
    </subcellularLocation>
    <text evidence="1">About half TF is bound to the ribosome near the polypeptide exit tunnel while the other half is free in the cytoplasm.</text>
</comment>
<comment type="domain">
    <text evidence="1">Consists of 3 domains; the N-terminus binds the ribosome, the middle domain has PPIase activity, while the C-terminus has intrinsic chaperone activity on its own.</text>
</comment>
<comment type="similarity">
    <text evidence="1">Belongs to the FKBP-type PPIase family. Tig subfamily.</text>
</comment>
<feature type="chain" id="PRO_1000022764" description="Trigger factor">
    <location>
        <begin position="1"/>
        <end position="551"/>
    </location>
</feature>
<feature type="domain" description="PPIase FKBP-type" evidence="1">
    <location>
        <begin position="165"/>
        <end position="250"/>
    </location>
</feature>
<feature type="region of interest" description="Disordered" evidence="2">
    <location>
        <begin position="442"/>
        <end position="551"/>
    </location>
</feature>
<feature type="compositionally biased region" description="Basic and acidic residues" evidence="2">
    <location>
        <begin position="458"/>
        <end position="472"/>
    </location>
</feature>
<feature type="compositionally biased region" description="Low complexity" evidence="2">
    <location>
        <begin position="513"/>
        <end position="541"/>
    </location>
</feature>
<feature type="compositionally biased region" description="Basic residues" evidence="2">
    <location>
        <begin position="542"/>
        <end position="551"/>
    </location>
</feature>
<accession>A5V3U6</accession>
<evidence type="ECO:0000255" key="1">
    <source>
        <dbReference type="HAMAP-Rule" id="MF_00303"/>
    </source>
</evidence>
<evidence type="ECO:0000256" key="2">
    <source>
        <dbReference type="SAM" id="MobiDB-lite"/>
    </source>
</evidence>
<dbReference type="EC" id="5.2.1.8" evidence="1"/>
<dbReference type="EMBL" id="CP000699">
    <property type="protein sequence ID" value="ABQ66962.1"/>
    <property type="molecule type" value="Genomic_DNA"/>
</dbReference>
<dbReference type="SMR" id="A5V3U6"/>
<dbReference type="STRING" id="392499.Swit_0594"/>
<dbReference type="PaxDb" id="392499-Swit_0594"/>
<dbReference type="KEGG" id="swi:Swit_0594"/>
<dbReference type="eggNOG" id="COG0544">
    <property type="taxonomic scope" value="Bacteria"/>
</dbReference>
<dbReference type="HOGENOM" id="CLU_033058_2_2_5"/>
<dbReference type="OrthoDB" id="9767721at2"/>
<dbReference type="Proteomes" id="UP000001989">
    <property type="component" value="Chromosome"/>
</dbReference>
<dbReference type="GO" id="GO:0005737">
    <property type="term" value="C:cytoplasm"/>
    <property type="evidence" value="ECO:0007669"/>
    <property type="project" value="UniProtKB-SubCell"/>
</dbReference>
<dbReference type="GO" id="GO:0003755">
    <property type="term" value="F:peptidyl-prolyl cis-trans isomerase activity"/>
    <property type="evidence" value="ECO:0007669"/>
    <property type="project" value="UniProtKB-UniRule"/>
</dbReference>
<dbReference type="GO" id="GO:0044183">
    <property type="term" value="F:protein folding chaperone"/>
    <property type="evidence" value="ECO:0007669"/>
    <property type="project" value="TreeGrafter"/>
</dbReference>
<dbReference type="GO" id="GO:0043022">
    <property type="term" value="F:ribosome binding"/>
    <property type="evidence" value="ECO:0007669"/>
    <property type="project" value="TreeGrafter"/>
</dbReference>
<dbReference type="GO" id="GO:0051083">
    <property type="term" value="P:'de novo' cotranslational protein folding"/>
    <property type="evidence" value="ECO:0007669"/>
    <property type="project" value="TreeGrafter"/>
</dbReference>
<dbReference type="GO" id="GO:0051301">
    <property type="term" value="P:cell division"/>
    <property type="evidence" value="ECO:0007669"/>
    <property type="project" value="UniProtKB-KW"/>
</dbReference>
<dbReference type="GO" id="GO:0061077">
    <property type="term" value="P:chaperone-mediated protein folding"/>
    <property type="evidence" value="ECO:0007669"/>
    <property type="project" value="TreeGrafter"/>
</dbReference>
<dbReference type="GO" id="GO:0015031">
    <property type="term" value="P:protein transport"/>
    <property type="evidence" value="ECO:0007669"/>
    <property type="project" value="UniProtKB-UniRule"/>
</dbReference>
<dbReference type="GO" id="GO:0043335">
    <property type="term" value="P:protein unfolding"/>
    <property type="evidence" value="ECO:0007669"/>
    <property type="project" value="TreeGrafter"/>
</dbReference>
<dbReference type="FunFam" id="3.10.50.40:FF:000001">
    <property type="entry name" value="Trigger factor"/>
    <property type="match status" value="1"/>
</dbReference>
<dbReference type="Gene3D" id="3.10.50.40">
    <property type="match status" value="1"/>
</dbReference>
<dbReference type="Gene3D" id="3.30.70.1050">
    <property type="entry name" value="Trigger factor ribosome-binding domain"/>
    <property type="match status" value="1"/>
</dbReference>
<dbReference type="Gene3D" id="1.10.3120.10">
    <property type="entry name" value="Trigger factor, C-terminal domain"/>
    <property type="match status" value="1"/>
</dbReference>
<dbReference type="HAMAP" id="MF_00303">
    <property type="entry name" value="Trigger_factor_Tig"/>
    <property type="match status" value="1"/>
</dbReference>
<dbReference type="InterPro" id="IPR046357">
    <property type="entry name" value="PPIase_dom_sf"/>
</dbReference>
<dbReference type="InterPro" id="IPR001179">
    <property type="entry name" value="PPIase_FKBP_dom"/>
</dbReference>
<dbReference type="InterPro" id="IPR005215">
    <property type="entry name" value="Trig_fac"/>
</dbReference>
<dbReference type="InterPro" id="IPR008880">
    <property type="entry name" value="Trigger_fac_C"/>
</dbReference>
<dbReference type="InterPro" id="IPR037041">
    <property type="entry name" value="Trigger_fac_C_sf"/>
</dbReference>
<dbReference type="InterPro" id="IPR008881">
    <property type="entry name" value="Trigger_fac_ribosome-bd_bac"/>
</dbReference>
<dbReference type="InterPro" id="IPR036611">
    <property type="entry name" value="Trigger_fac_ribosome-bd_sf"/>
</dbReference>
<dbReference type="InterPro" id="IPR027304">
    <property type="entry name" value="Trigger_fact/SurA_dom_sf"/>
</dbReference>
<dbReference type="NCBIfam" id="TIGR00115">
    <property type="entry name" value="tig"/>
    <property type="match status" value="1"/>
</dbReference>
<dbReference type="PANTHER" id="PTHR30560">
    <property type="entry name" value="TRIGGER FACTOR CHAPERONE AND PEPTIDYL-PROLYL CIS/TRANS ISOMERASE"/>
    <property type="match status" value="1"/>
</dbReference>
<dbReference type="PANTHER" id="PTHR30560:SF3">
    <property type="entry name" value="TRIGGER FACTOR-LIKE PROTEIN TIG, CHLOROPLASTIC"/>
    <property type="match status" value="1"/>
</dbReference>
<dbReference type="Pfam" id="PF00254">
    <property type="entry name" value="FKBP_C"/>
    <property type="match status" value="1"/>
</dbReference>
<dbReference type="Pfam" id="PF05698">
    <property type="entry name" value="Trigger_C"/>
    <property type="match status" value="1"/>
</dbReference>
<dbReference type="Pfam" id="PF05697">
    <property type="entry name" value="Trigger_N"/>
    <property type="match status" value="1"/>
</dbReference>
<dbReference type="SUPFAM" id="SSF54534">
    <property type="entry name" value="FKBP-like"/>
    <property type="match status" value="1"/>
</dbReference>
<dbReference type="SUPFAM" id="SSF109998">
    <property type="entry name" value="Triger factor/SurA peptide-binding domain-like"/>
    <property type="match status" value="1"/>
</dbReference>
<dbReference type="SUPFAM" id="SSF102735">
    <property type="entry name" value="Trigger factor ribosome-binding domain"/>
    <property type="match status" value="1"/>
</dbReference>
<dbReference type="PROSITE" id="PS50059">
    <property type="entry name" value="FKBP_PPIASE"/>
    <property type="match status" value="1"/>
</dbReference>